<gene>
    <name type="primary">Prss8</name>
</gene>
<protein>
    <recommendedName>
        <fullName>Prostasin</fullName>
        <ecNumber>3.4.21.-</ecNumber>
    </recommendedName>
    <alternativeName>
        <fullName>Channel-activating protease 1</fullName>
        <shortName>CAP1</shortName>
    </alternativeName>
    <alternativeName>
        <fullName>Serine protease 8</fullName>
    </alternativeName>
    <component>
        <recommendedName>
            <fullName>Prostasin light chain</fullName>
        </recommendedName>
    </component>
    <component>
        <recommendedName>
            <fullName>Prostasin heavy chain</fullName>
        </recommendedName>
    </component>
</protein>
<feature type="signal peptide" evidence="2">
    <location>
        <begin position="1"/>
        <end position="29"/>
    </location>
</feature>
<feature type="propeptide" id="PRO_0000028035" description="Activation peptide" evidence="1">
    <location>
        <begin position="30"/>
        <end position="32"/>
    </location>
</feature>
<feature type="chain" id="PRO_0000240513" description="Prostasin">
    <location>
        <begin position="33"/>
        <end position="322"/>
    </location>
</feature>
<feature type="chain" id="PRO_0000028036" description="Prostasin light chain">
    <location>
        <begin position="33"/>
        <end position="44"/>
    </location>
</feature>
<feature type="chain" id="PRO_0000028037" description="Prostasin heavy chain">
    <location>
        <begin position="45"/>
        <end position="322"/>
    </location>
</feature>
<feature type="propeptide" id="PRO_0000028038" evidence="1">
    <location>
        <begin position="323"/>
        <end position="342"/>
    </location>
</feature>
<feature type="transmembrane region" description="Helical" evidence="2">
    <location>
        <begin position="320"/>
        <end position="340"/>
    </location>
</feature>
<feature type="domain" description="Peptidase S1" evidence="3">
    <location>
        <begin position="45"/>
        <end position="286"/>
    </location>
</feature>
<feature type="active site" description="Charge relay system" evidence="1">
    <location>
        <position position="85"/>
    </location>
</feature>
<feature type="active site" description="Charge relay system" evidence="1">
    <location>
        <position position="134"/>
    </location>
</feature>
<feature type="active site" description="Charge relay system" evidence="1">
    <location>
        <position position="238"/>
    </location>
</feature>
<feature type="glycosylation site" description="N-linked (GlcNAc...) asparagine" evidence="2">
    <location>
        <position position="159"/>
    </location>
</feature>
<feature type="disulfide bond" description="Interchain (between light and heavy chains)" evidence="3">
    <location>
        <begin position="37"/>
        <end position="154"/>
    </location>
</feature>
<feature type="disulfide bond" evidence="3">
    <location>
        <begin position="70"/>
        <end position="86"/>
    </location>
</feature>
<feature type="disulfide bond" evidence="3">
    <location>
        <begin position="168"/>
        <end position="244"/>
    </location>
</feature>
<feature type="disulfide bond" evidence="3">
    <location>
        <begin position="201"/>
        <end position="223"/>
    </location>
</feature>
<feature type="disulfide bond" evidence="3">
    <location>
        <begin position="234"/>
        <end position="262"/>
    </location>
</feature>
<feature type="sequence conflict" description="In Ref. 1; BAB20281." evidence="4" ref="1">
    <original>V</original>
    <variation>I</variation>
    <location>
        <position position="17"/>
    </location>
</feature>
<feature type="sequence conflict" description="In Ref. 1; BAB20281." evidence="4" ref="1">
    <original>V</original>
    <variation>A</variation>
    <location>
        <position position="292"/>
    </location>
</feature>
<reference key="1">
    <citation type="journal article" date="2001" name="J. Am. Soc. Nephrol.">
        <title>Activation of epithelial sodium channels by prostasin in Xenopus oocytes.</title>
        <authorList>
            <person name="Adachi M."/>
            <person name="Kitamura K."/>
            <person name="Miyoshi T."/>
            <person name="Narikiyo T."/>
            <person name="Iwashita K."/>
            <person name="Shiraishi N."/>
            <person name="Nonoguchi H."/>
            <person name="Tomita K."/>
        </authorList>
    </citation>
    <scope>NUCLEOTIDE SEQUENCE [MRNA]</scope>
    <source>
        <tissue>Kidney</tissue>
    </source>
</reference>
<reference key="2">
    <citation type="submission" date="1999-11" db="EMBL/GenBank/DDBJ databases">
        <title>Molecular cloning and expression of rat prostasin.</title>
        <authorList>
            <person name="Wang C."/>
        </authorList>
    </citation>
    <scope>NUCLEOTIDE SEQUENCE [MRNA]</scope>
</reference>
<reference key="3">
    <citation type="journal article" date="2004" name="Genome Res.">
        <title>The status, quality, and expansion of the NIH full-length cDNA project: the Mammalian Gene Collection (MGC).</title>
        <authorList>
            <consortium name="The MGC Project Team"/>
        </authorList>
    </citation>
    <scope>NUCLEOTIDE SEQUENCE [LARGE SCALE MRNA]</scope>
    <source>
        <tissue>Prostate</tissue>
    </source>
</reference>
<dbReference type="EC" id="3.4.21.-"/>
<dbReference type="EMBL" id="AB017638">
    <property type="protein sequence ID" value="BAB20281.1"/>
    <property type="molecule type" value="mRNA"/>
</dbReference>
<dbReference type="EMBL" id="AF202076">
    <property type="protein sequence ID" value="AAG32641.1"/>
    <property type="molecule type" value="mRNA"/>
</dbReference>
<dbReference type="EMBL" id="BC061800">
    <property type="protein sequence ID" value="AAH61800.1"/>
    <property type="molecule type" value="mRNA"/>
</dbReference>
<dbReference type="RefSeq" id="NP_620191.1">
    <property type="nucleotide sequence ID" value="NM_138836.1"/>
</dbReference>
<dbReference type="SMR" id="Q9ES87"/>
<dbReference type="FunCoup" id="Q9ES87">
    <property type="interactions" value="28"/>
</dbReference>
<dbReference type="STRING" id="10116.ENSRNOP00000026572"/>
<dbReference type="MEROPS" id="S01.159"/>
<dbReference type="GlyCosmos" id="Q9ES87">
    <property type="glycosylation" value="1 site, No reported glycans"/>
</dbReference>
<dbReference type="GlyGen" id="Q9ES87">
    <property type="glycosylation" value="1 site"/>
</dbReference>
<dbReference type="PhosphoSitePlus" id="Q9ES87"/>
<dbReference type="PaxDb" id="10116-ENSRNOP00000026572"/>
<dbReference type="GeneID" id="192107"/>
<dbReference type="KEGG" id="rno:192107"/>
<dbReference type="UCSC" id="RGD:619973">
    <property type="organism name" value="rat"/>
</dbReference>
<dbReference type="AGR" id="RGD:619973"/>
<dbReference type="CTD" id="5652"/>
<dbReference type="RGD" id="619973">
    <property type="gene designation" value="Prss8"/>
</dbReference>
<dbReference type="eggNOG" id="KOG3627">
    <property type="taxonomic scope" value="Eukaryota"/>
</dbReference>
<dbReference type="InParanoid" id="Q9ES87"/>
<dbReference type="OrthoDB" id="65084at9989"/>
<dbReference type="PhylomeDB" id="Q9ES87"/>
<dbReference type="PRO" id="PR:Q9ES87"/>
<dbReference type="Proteomes" id="UP000002494">
    <property type="component" value="Unplaced"/>
</dbReference>
<dbReference type="GO" id="GO:0009897">
    <property type="term" value="C:external side of plasma membrane"/>
    <property type="evidence" value="ECO:0000266"/>
    <property type="project" value="RGD"/>
</dbReference>
<dbReference type="GO" id="GO:0005615">
    <property type="term" value="C:extracellular space"/>
    <property type="evidence" value="ECO:0000314"/>
    <property type="project" value="RGD"/>
</dbReference>
<dbReference type="GO" id="GO:0045121">
    <property type="term" value="C:membrane raft"/>
    <property type="evidence" value="ECO:0000266"/>
    <property type="project" value="RGD"/>
</dbReference>
<dbReference type="GO" id="GO:0005886">
    <property type="term" value="C:plasma membrane"/>
    <property type="evidence" value="ECO:0000266"/>
    <property type="project" value="RGD"/>
</dbReference>
<dbReference type="GO" id="GO:0004252">
    <property type="term" value="F:serine-type endopeptidase activity"/>
    <property type="evidence" value="ECO:0007669"/>
    <property type="project" value="InterPro"/>
</dbReference>
<dbReference type="GO" id="GO:0017080">
    <property type="term" value="F:sodium channel regulator activity"/>
    <property type="evidence" value="ECO:0000266"/>
    <property type="project" value="RGD"/>
</dbReference>
<dbReference type="GO" id="GO:0001942">
    <property type="term" value="P:hair follicle development"/>
    <property type="evidence" value="ECO:0000266"/>
    <property type="project" value="RGD"/>
</dbReference>
<dbReference type="GO" id="GO:1902307">
    <property type="term" value="P:positive regulation of sodium ion transmembrane transport"/>
    <property type="evidence" value="ECO:0000314"/>
    <property type="project" value="RGD"/>
</dbReference>
<dbReference type="GO" id="GO:0010765">
    <property type="term" value="P:positive regulation of sodium ion transport"/>
    <property type="evidence" value="ECO:0000266"/>
    <property type="project" value="RGD"/>
</dbReference>
<dbReference type="GO" id="GO:0006508">
    <property type="term" value="P:proteolysis"/>
    <property type="evidence" value="ECO:0007669"/>
    <property type="project" value="UniProtKB-KW"/>
</dbReference>
<dbReference type="GO" id="GO:0051385">
    <property type="term" value="P:response to mineralocorticoid"/>
    <property type="evidence" value="ECO:0000270"/>
    <property type="project" value="RGD"/>
</dbReference>
<dbReference type="GO" id="GO:0043434">
    <property type="term" value="P:response to peptide hormone"/>
    <property type="evidence" value="ECO:0000270"/>
    <property type="project" value="RGD"/>
</dbReference>
<dbReference type="GO" id="GO:0009410">
    <property type="term" value="P:response to xenobiotic stimulus"/>
    <property type="evidence" value="ECO:0000270"/>
    <property type="project" value="RGD"/>
</dbReference>
<dbReference type="GO" id="GO:0070633">
    <property type="term" value="P:transepithelial transport"/>
    <property type="evidence" value="ECO:0000266"/>
    <property type="project" value="RGD"/>
</dbReference>
<dbReference type="CDD" id="cd00190">
    <property type="entry name" value="Tryp_SPc"/>
    <property type="match status" value="1"/>
</dbReference>
<dbReference type="FunFam" id="2.40.10.10:FF:000039">
    <property type="entry name" value="Brain-specific serine protease 4"/>
    <property type="match status" value="1"/>
</dbReference>
<dbReference type="Gene3D" id="2.40.10.10">
    <property type="entry name" value="Trypsin-like serine proteases"/>
    <property type="match status" value="2"/>
</dbReference>
<dbReference type="InterPro" id="IPR009003">
    <property type="entry name" value="Peptidase_S1_PA"/>
</dbReference>
<dbReference type="InterPro" id="IPR043504">
    <property type="entry name" value="Peptidase_S1_PA_chymotrypsin"/>
</dbReference>
<dbReference type="InterPro" id="IPR001314">
    <property type="entry name" value="Peptidase_S1A"/>
</dbReference>
<dbReference type="InterPro" id="IPR001254">
    <property type="entry name" value="Trypsin_dom"/>
</dbReference>
<dbReference type="InterPro" id="IPR018114">
    <property type="entry name" value="TRYPSIN_HIS"/>
</dbReference>
<dbReference type="InterPro" id="IPR033116">
    <property type="entry name" value="TRYPSIN_SER"/>
</dbReference>
<dbReference type="PANTHER" id="PTHR24253:SF169">
    <property type="entry name" value="PROSTASIN"/>
    <property type="match status" value="1"/>
</dbReference>
<dbReference type="PANTHER" id="PTHR24253">
    <property type="entry name" value="TRANSMEMBRANE PROTEASE SERINE"/>
    <property type="match status" value="1"/>
</dbReference>
<dbReference type="Pfam" id="PF00089">
    <property type="entry name" value="Trypsin"/>
    <property type="match status" value="1"/>
</dbReference>
<dbReference type="PRINTS" id="PR00722">
    <property type="entry name" value="CHYMOTRYPSIN"/>
</dbReference>
<dbReference type="SMART" id="SM00020">
    <property type="entry name" value="Tryp_SPc"/>
    <property type="match status" value="1"/>
</dbReference>
<dbReference type="SUPFAM" id="SSF50494">
    <property type="entry name" value="Trypsin-like serine proteases"/>
    <property type="match status" value="1"/>
</dbReference>
<dbReference type="PROSITE" id="PS50240">
    <property type="entry name" value="TRYPSIN_DOM"/>
    <property type="match status" value="1"/>
</dbReference>
<dbReference type="PROSITE" id="PS00134">
    <property type="entry name" value="TRYPSIN_HIS"/>
    <property type="match status" value="1"/>
</dbReference>
<dbReference type="PROSITE" id="PS00135">
    <property type="entry name" value="TRYPSIN_SER"/>
    <property type="match status" value="1"/>
</dbReference>
<accession>Q9ES87</accession>
<accession>Q6GSY8</accession>
<accession>Q9ER01</accession>
<sequence>MALRVGLGLGQLEALFVLLLIGLLQSRIGADGTEASCGAVIQPRITGGGSAKPGQWPWQVSITYNGVHVCGGSLVSNQWVVSAAHCFPREHSKEEYEVKLGAHQLDSFSNDIVVHTVAQIISHSSYREEGSQGDIALIRLSSPVTFSRYIRPICLPAANASFPNGLHCTVTGWGHVAPSVSLQTPRPLQQLEVPLISRETCSCLYNINAVPEEPHTIQQDMLCAGYVKGGKDACQGDSGGPLSCPIDGLWYLAGIVSWGDACGAPNRPGVYTLTSTYASWIHHHVAELQPRVVPQTQESQPDGHLCNHHPVFNLAAAQKLSRPILFLPLSLTLGLFSLWLEH</sequence>
<keyword id="KW-1003">Cell membrane</keyword>
<keyword id="KW-1015">Disulfide bond</keyword>
<keyword id="KW-0325">Glycoprotein</keyword>
<keyword id="KW-0378">Hydrolase</keyword>
<keyword id="KW-0472">Membrane</keyword>
<keyword id="KW-0645">Protease</keyword>
<keyword id="KW-1185">Reference proteome</keyword>
<keyword id="KW-0964">Secreted</keyword>
<keyword id="KW-0720">Serine protease</keyword>
<keyword id="KW-0732">Signal</keyword>
<keyword id="KW-0812">Transmembrane</keyword>
<keyword id="KW-1133">Transmembrane helix</keyword>
<keyword id="KW-0865">Zymogen</keyword>
<name>PRSS8_RAT</name>
<evidence type="ECO:0000250" key="1"/>
<evidence type="ECO:0000255" key="2"/>
<evidence type="ECO:0000255" key="3">
    <source>
        <dbReference type="PROSITE-ProRule" id="PRU00274"/>
    </source>
</evidence>
<evidence type="ECO:0000305" key="4"/>
<organism>
    <name type="scientific">Rattus norvegicus</name>
    <name type="common">Rat</name>
    <dbReference type="NCBI Taxonomy" id="10116"/>
    <lineage>
        <taxon>Eukaryota</taxon>
        <taxon>Metazoa</taxon>
        <taxon>Chordata</taxon>
        <taxon>Craniata</taxon>
        <taxon>Vertebrata</taxon>
        <taxon>Euteleostomi</taxon>
        <taxon>Mammalia</taxon>
        <taxon>Eutheria</taxon>
        <taxon>Euarchontoglires</taxon>
        <taxon>Glires</taxon>
        <taxon>Rodentia</taxon>
        <taxon>Myomorpha</taxon>
        <taxon>Muroidea</taxon>
        <taxon>Muridae</taxon>
        <taxon>Murinae</taxon>
        <taxon>Rattus</taxon>
    </lineage>
</organism>
<proteinExistence type="evidence at transcript level"/>
<comment type="function">
    <text evidence="1">Possesses a trypsin-like cleavage specificity with a preference for poly-basic substrates. Stimulates epithelial sodium channel (ENaC) activity through activating cleavage of the gamma subunits (SCNN1G) (By similarity).</text>
</comment>
<comment type="subunit">
    <text evidence="1">Heterodimer of two chains, light and heavy, held by a disulfide bond.</text>
</comment>
<comment type="subcellular location">
    <subcellularLocation>
        <location evidence="1">Cell membrane</location>
        <topology evidence="1">Single-pass membrane protein</topology>
    </subcellularLocation>
</comment>
<comment type="subcellular location">
    <molecule>Prostasin</molecule>
    <subcellularLocation>
        <location evidence="1">Secreted</location>
        <location evidence="1">Extracellular space</location>
    </subcellularLocation>
</comment>
<comment type="subcellular location">
    <molecule>Prostasin light chain</molecule>
    <subcellularLocation>
        <location evidence="1">Secreted</location>
        <location evidence="1">Extracellular space</location>
    </subcellularLocation>
    <text evidence="1">Found in the seminal fluid. Secreted after cleavage of its C-terminus.</text>
</comment>
<comment type="subcellular location">
    <molecule>Prostasin heavy chain</molecule>
    <subcellularLocation>
        <location evidence="1">Secreted</location>
        <location evidence="1">Extracellular space</location>
    </subcellularLocation>
    <text evidence="1">Found in the seminal fluid. Secreted after cleavage of its C-terminus.</text>
</comment>
<comment type="similarity">
    <text evidence="3">Belongs to the peptidase S1 family.</text>
</comment>